<accession>A1WUV1</accession>
<comment type="function">
    <text evidence="1">Presumably involved in the processing and regular turnover of intracellular proteins. Catalyzes the removal of unsubstituted N-terminal amino acids from various peptides.</text>
</comment>
<comment type="catalytic activity">
    <reaction evidence="1">
        <text>Release of an N-terminal amino acid, Xaa-|-Yaa-, in which Xaa is preferably Leu, but may be other amino acids including Pro although not Arg or Lys, and Yaa may be Pro. Amino acid amides and methyl esters are also readily hydrolyzed, but rates on arylamides are exceedingly low.</text>
        <dbReference type="EC" id="3.4.11.1"/>
    </reaction>
</comment>
<comment type="catalytic activity">
    <reaction evidence="1">
        <text>Release of an N-terminal amino acid, preferentially leucine, but not glutamic or aspartic acids.</text>
        <dbReference type="EC" id="3.4.11.10"/>
    </reaction>
</comment>
<comment type="cofactor">
    <cofactor evidence="1">
        <name>Mn(2+)</name>
        <dbReference type="ChEBI" id="CHEBI:29035"/>
    </cofactor>
    <text evidence="1">Binds 2 manganese ions per subunit.</text>
</comment>
<comment type="subcellular location">
    <subcellularLocation>
        <location evidence="1">Cytoplasm</location>
    </subcellularLocation>
</comment>
<comment type="similarity">
    <text evidence="1">Belongs to the peptidase M17 family.</text>
</comment>
<sequence length="499" mass="53334">MELKTKSGDPARQRTACVVVGVYERRRMSEAARAVDAASDGYLSHLLRRGDLEGEAGQTLLLPDCPGVRTDRVLLVGCGRERDFNERTYRKAVTAAARALEQAGTGEAILFLPELPVRGRDVAWRVAATAEILETTLYRFDTYKSDPRPPRRPLRQATLAVPRRADLRRAQPALTLGQAAGRGANFSRDLGNTPANICTPGYLGEQAEALAQRFDGVRAEILGPAELEEQGLAALLAVARGAEAPPRLVVLHYRGADDDQAPVALVGKGITFDSGGISIKPSASMDEMKYDMSGAAAVFGAVHAAAEAQLPLNLVAVIPATENMPDGRATRPGDIIDSLDGQRIEVLNTDAEGRLVLADGLAYARRLEPSEVVDVATLTGAAIIGLGHHRHAVMGNAPGLVRDLLQAGERAADRGWELPLDEEYDEQLRSPFADVANIGGQPAGTITAGCFLQRFARGLRWAHLDIAGTAWKSGEHKGATGRPVPLLTHFLAGRAGWTL</sequence>
<reference key="1">
    <citation type="submission" date="2006-12" db="EMBL/GenBank/DDBJ databases">
        <title>Complete sequence of Halorhodospira halophila SL1.</title>
        <authorList>
            <consortium name="US DOE Joint Genome Institute"/>
            <person name="Copeland A."/>
            <person name="Lucas S."/>
            <person name="Lapidus A."/>
            <person name="Barry K."/>
            <person name="Detter J.C."/>
            <person name="Glavina del Rio T."/>
            <person name="Hammon N."/>
            <person name="Israni S."/>
            <person name="Dalin E."/>
            <person name="Tice H."/>
            <person name="Pitluck S."/>
            <person name="Saunders E."/>
            <person name="Brettin T."/>
            <person name="Bruce D."/>
            <person name="Han C."/>
            <person name="Tapia R."/>
            <person name="Schmutz J."/>
            <person name="Larimer F."/>
            <person name="Land M."/>
            <person name="Hauser L."/>
            <person name="Kyrpides N."/>
            <person name="Mikhailova N."/>
            <person name="Hoff W."/>
            <person name="Richardson P."/>
        </authorList>
    </citation>
    <scope>NUCLEOTIDE SEQUENCE [LARGE SCALE GENOMIC DNA]</scope>
    <source>
        <strain>DSM 244 / SL1</strain>
    </source>
</reference>
<protein>
    <recommendedName>
        <fullName evidence="1">Probable cytosol aminopeptidase</fullName>
        <ecNumber evidence="1">3.4.11.1</ecNumber>
    </recommendedName>
    <alternativeName>
        <fullName evidence="1">Leucine aminopeptidase</fullName>
        <shortName evidence="1">LAP</shortName>
        <ecNumber evidence="1">3.4.11.10</ecNumber>
    </alternativeName>
    <alternativeName>
        <fullName evidence="1">Leucyl aminopeptidase</fullName>
    </alternativeName>
</protein>
<keyword id="KW-0031">Aminopeptidase</keyword>
<keyword id="KW-0963">Cytoplasm</keyword>
<keyword id="KW-0378">Hydrolase</keyword>
<keyword id="KW-0464">Manganese</keyword>
<keyword id="KW-0479">Metal-binding</keyword>
<keyword id="KW-0645">Protease</keyword>
<keyword id="KW-1185">Reference proteome</keyword>
<evidence type="ECO:0000255" key="1">
    <source>
        <dbReference type="HAMAP-Rule" id="MF_00181"/>
    </source>
</evidence>
<name>AMPA_HALHL</name>
<proteinExistence type="inferred from homology"/>
<organism>
    <name type="scientific">Halorhodospira halophila (strain DSM 244 / SL1)</name>
    <name type="common">Ectothiorhodospira halophila (strain DSM 244 / SL1)</name>
    <dbReference type="NCBI Taxonomy" id="349124"/>
    <lineage>
        <taxon>Bacteria</taxon>
        <taxon>Pseudomonadati</taxon>
        <taxon>Pseudomonadota</taxon>
        <taxon>Gammaproteobacteria</taxon>
        <taxon>Chromatiales</taxon>
        <taxon>Ectothiorhodospiraceae</taxon>
        <taxon>Halorhodospira</taxon>
    </lineage>
</organism>
<dbReference type="EC" id="3.4.11.1" evidence="1"/>
<dbReference type="EC" id="3.4.11.10" evidence="1"/>
<dbReference type="EMBL" id="CP000544">
    <property type="protein sequence ID" value="ABM61463.1"/>
    <property type="molecule type" value="Genomic_DNA"/>
</dbReference>
<dbReference type="RefSeq" id="WP_011813486.1">
    <property type="nucleotide sequence ID" value="NC_008789.1"/>
</dbReference>
<dbReference type="SMR" id="A1WUV1"/>
<dbReference type="STRING" id="349124.Hhal_0681"/>
<dbReference type="MEROPS" id="M17.003"/>
<dbReference type="KEGG" id="hha:Hhal_0681"/>
<dbReference type="eggNOG" id="COG0260">
    <property type="taxonomic scope" value="Bacteria"/>
</dbReference>
<dbReference type="HOGENOM" id="CLU_013734_0_1_6"/>
<dbReference type="OrthoDB" id="9809354at2"/>
<dbReference type="Proteomes" id="UP000000647">
    <property type="component" value="Chromosome"/>
</dbReference>
<dbReference type="GO" id="GO:0005737">
    <property type="term" value="C:cytoplasm"/>
    <property type="evidence" value="ECO:0007669"/>
    <property type="project" value="UniProtKB-SubCell"/>
</dbReference>
<dbReference type="GO" id="GO:0030145">
    <property type="term" value="F:manganese ion binding"/>
    <property type="evidence" value="ECO:0007669"/>
    <property type="project" value="UniProtKB-UniRule"/>
</dbReference>
<dbReference type="GO" id="GO:0070006">
    <property type="term" value="F:metalloaminopeptidase activity"/>
    <property type="evidence" value="ECO:0007669"/>
    <property type="project" value="InterPro"/>
</dbReference>
<dbReference type="GO" id="GO:0006508">
    <property type="term" value="P:proteolysis"/>
    <property type="evidence" value="ECO:0007669"/>
    <property type="project" value="UniProtKB-KW"/>
</dbReference>
<dbReference type="CDD" id="cd00433">
    <property type="entry name" value="Peptidase_M17"/>
    <property type="match status" value="1"/>
</dbReference>
<dbReference type="Gene3D" id="3.40.220.10">
    <property type="entry name" value="Leucine Aminopeptidase, subunit E, domain 1"/>
    <property type="match status" value="1"/>
</dbReference>
<dbReference type="Gene3D" id="3.40.630.10">
    <property type="entry name" value="Zn peptidases"/>
    <property type="match status" value="1"/>
</dbReference>
<dbReference type="HAMAP" id="MF_00181">
    <property type="entry name" value="Cytosol_peptidase_M17"/>
    <property type="match status" value="1"/>
</dbReference>
<dbReference type="InterPro" id="IPR011356">
    <property type="entry name" value="Leucine_aapep/pepB"/>
</dbReference>
<dbReference type="InterPro" id="IPR043472">
    <property type="entry name" value="Macro_dom-like"/>
</dbReference>
<dbReference type="InterPro" id="IPR000819">
    <property type="entry name" value="Peptidase_M17_C"/>
</dbReference>
<dbReference type="InterPro" id="IPR023042">
    <property type="entry name" value="Peptidase_M17_leu_NH2_pept"/>
</dbReference>
<dbReference type="InterPro" id="IPR008283">
    <property type="entry name" value="Peptidase_M17_N"/>
</dbReference>
<dbReference type="NCBIfam" id="NF002073">
    <property type="entry name" value="PRK00913.1-2"/>
    <property type="match status" value="1"/>
</dbReference>
<dbReference type="NCBIfam" id="NF002074">
    <property type="entry name" value="PRK00913.1-4"/>
    <property type="match status" value="1"/>
</dbReference>
<dbReference type="PANTHER" id="PTHR11963:SF23">
    <property type="entry name" value="CYTOSOL AMINOPEPTIDASE"/>
    <property type="match status" value="1"/>
</dbReference>
<dbReference type="PANTHER" id="PTHR11963">
    <property type="entry name" value="LEUCINE AMINOPEPTIDASE-RELATED"/>
    <property type="match status" value="1"/>
</dbReference>
<dbReference type="Pfam" id="PF00883">
    <property type="entry name" value="Peptidase_M17"/>
    <property type="match status" value="1"/>
</dbReference>
<dbReference type="Pfam" id="PF02789">
    <property type="entry name" value="Peptidase_M17_N"/>
    <property type="match status" value="1"/>
</dbReference>
<dbReference type="PRINTS" id="PR00481">
    <property type="entry name" value="LAMNOPPTDASE"/>
</dbReference>
<dbReference type="SUPFAM" id="SSF52949">
    <property type="entry name" value="Macro domain-like"/>
    <property type="match status" value="1"/>
</dbReference>
<dbReference type="SUPFAM" id="SSF53187">
    <property type="entry name" value="Zn-dependent exopeptidases"/>
    <property type="match status" value="1"/>
</dbReference>
<dbReference type="PROSITE" id="PS00631">
    <property type="entry name" value="CYTOSOL_AP"/>
    <property type="match status" value="1"/>
</dbReference>
<gene>
    <name evidence="1" type="primary">pepA</name>
    <name type="ordered locus">Hhal_0681</name>
</gene>
<feature type="chain" id="PRO_1000019925" description="Probable cytosol aminopeptidase">
    <location>
        <begin position="1"/>
        <end position="499"/>
    </location>
</feature>
<feature type="active site" evidence="1">
    <location>
        <position position="280"/>
    </location>
</feature>
<feature type="active site" evidence="1">
    <location>
        <position position="354"/>
    </location>
</feature>
<feature type="binding site" evidence="1">
    <location>
        <position position="268"/>
    </location>
    <ligand>
        <name>Mn(2+)</name>
        <dbReference type="ChEBI" id="CHEBI:29035"/>
        <label>2</label>
    </ligand>
</feature>
<feature type="binding site" evidence="1">
    <location>
        <position position="273"/>
    </location>
    <ligand>
        <name>Mn(2+)</name>
        <dbReference type="ChEBI" id="CHEBI:29035"/>
        <label>1</label>
    </ligand>
</feature>
<feature type="binding site" evidence="1">
    <location>
        <position position="273"/>
    </location>
    <ligand>
        <name>Mn(2+)</name>
        <dbReference type="ChEBI" id="CHEBI:29035"/>
        <label>2</label>
    </ligand>
</feature>
<feature type="binding site" evidence="1">
    <location>
        <position position="291"/>
    </location>
    <ligand>
        <name>Mn(2+)</name>
        <dbReference type="ChEBI" id="CHEBI:29035"/>
        <label>2</label>
    </ligand>
</feature>
<feature type="binding site" evidence="1">
    <location>
        <position position="350"/>
    </location>
    <ligand>
        <name>Mn(2+)</name>
        <dbReference type="ChEBI" id="CHEBI:29035"/>
        <label>1</label>
    </ligand>
</feature>
<feature type="binding site" evidence="1">
    <location>
        <position position="352"/>
    </location>
    <ligand>
        <name>Mn(2+)</name>
        <dbReference type="ChEBI" id="CHEBI:29035"/>
        <label>1</label>
    </ligand>
</feature>
<feature type="binding site" evidence="1">
    <location>
        <position position="352"/>
    </location>
    <ligand>
        <name>Mn(2+)</name>
        <dbReference type="ChEBI" id="CHEBI:29035"/>
        <label>2</label>
    </ligand>
</feature>